<protein>
    <recommendedName>
        <fullName>Corticoliberin</fullName>
    </recommendedName>
    <alternativeName>
        <fullName>Corticotropin-releasing factor</fullName>
        <shortName>CRF</shortName>
    </alternativeName>
    <alternativeName>
        <fullName>Corticotropin-releasing hormone</fullName>
    </alternativeName>
</protein>
<name>CRF_RAT</name>
<reference key="1">
    <citation type="journal article" date="1985" name="FEBS Lett.">
        <title>Cloning and sequence analysis of cDNA for rat corticotropin-releasing factor precursor.</title>
        <authorList>
            <person name="Jingami H."/>
            <person name="Mizuno N."/>
            <person name="Takahashi H."/>
            <person name="Shibahara S."/>
            <person name="Furutani Y."/>
            <person name="Imura H."/>
            <person name="Numa S."/>
        </authorList>
    </citation>
    <scope>NUCLEOTIDE SEQUENCE [MRNA]</scope>
    <scope>TISSUE SPECIFICITY</scope>
</reference>
<reference key="2">
    <citation type="journal article" date="1987" name="Mol. Endocrinol.">
        <title>Rat corticotropin-releasing hormone gene: sequence and tissue-specific expression.</title>
        <authorList>
            <person name="Thompson R.C."/>
            <person name="Seasholtz A.F."/>
            <person name="Herbert E."/>
        </authorList>
    </citation>
    <scope>NUCLEOTIDE SEQUENCE [GENOMIC DNA]</scope>
    <source>
        <tissue>Liver</tissue>
    </source>
</reference>
<reference key="3">
    <citation type="journal article" date="1983" name="Proc. Natl. Acad. Sci. U.S.A.">
        <title>Characterization of rat hypothalamic corticotropin-releasing factor.</title>
        <authorList>
            <person name="Rivier J."/>
            <person name="Spiess J."/>
            <person name="Vale W."/>
        </authorList>
    </citation>
    <scope>PROTEIN SEQUENCE OF 145-185</scope>
    <scope>FUNCTION</scope>
    <scope>AMIDATION AT ILE-185</scope>
    <scope>SUBCELLULAR LOCATION</scope>
</reference>
<organism>
    <name type="scientific">Rattus norvegicus</name>
    <name type="common">Rat</name>
    <dbReference type="NCBI Taxonomy" id="10116"/>
    <lineage>
        <taxon>Eukaryota</taxon>
        <taxon>Metazoa</taxon>
        <taxon>Chordata</taxon>
        <taxon>Craniata</taxon>
        <taxon>Vertebrata</taxon>
        <taxon>Euteleostomi</taxon>
        <taxon>Mammalia</taxon>
        <taxon>Eutheria</taxon>
        <taxon>Euarchontoglires</taxon>
        <taxon>Glires</taxon>
        <taxon>Rodentia</taxon>
        <taxon>Myomorpha</taxon>
        <taxon>Muroidea</taxon>
        <taxon>Muridae</taxon>
        <taxon>Murinae</taxon>
        <taxon>Rattus</taxon>
    </lineage>
</organism>
<proteinExistence type="evidence at protein level"/>
<evidence type="ECO:0000250" key="1">
    <source>
        <dbReference type="UniProtKB" id="P06850"/>
    </source>
</evidence>
<evidence type="ECO:0000250" key="2">
    <source>
        <dbReference type="UniProtKB" id="Q8CIT0"/>
    </source>
</evidence>
<evidence type="ECO:0000255" key="3"/>
<evidence type="ECO:0000256" key="4">
    <source>
        <dbReference type="SAM" id="MobiDB-lite"/>
    </source>
</evidence>
<evidence type="ECO:0000269" key="5">
    <source>
    </source>
</evidence>
<evidence type="ECO:0000269" key="6">
    <source>
    </source>
</evidence>
<evidence type="ECO:0000305" key="7"/>
<comment type="function">
    <text evidence="2 6">Hormone regulating the release of corticotropin from pituitary gland (PubMed:6603620). Induces NLRP6 in intestinal epithelial cells, hence may influence gut microbiota profile (By similarity).</text>
</comment>
<comment type="subunit">
    <text evidence="1">Interacts (via C-terminus) with CRFR1 (via N-terminal extracellular domain).</text>
</comment>
<comment type="subcellular location">
    <subcellularLocation>
        <location evidence="6">Secreted</location>
    </subcellularLocation>
</comment>
<comment type="tissue specificity">
    <text evidence="5">Produced by the hypothalamus.</text>
</comment>
<comment type="similarity">
    <text evidence="7">Belongs to the sauvagine/corticotropin-releasing factor/urotensin I family.</text>
</comment>
<dbReference type="EMBL" id="X03036">
    <property type="protein sequence ID" value="CAA26838.1"/>
    <property type="molecule type" value="mRNA"/>
</dbReference>
<dbReference type="EMBL" id="M54987">
    <property type="protein sequence ID" value="AAA40965.1"/>
    <property type="molecule type" value="Genomic_DNA"/>
</dbReference>
<dbReference type="PIR" id="A40906">
    <property type="entry name" value="RHRTCE"/>
</dbReference>
<dbReference type="RefSeq" id="NP_112281.1">
    <property type="nucleotide sequence ID" value="NM_031019.2"/>
</dbReference>
<dbReference type="FunCoup" id="P01143">
    <property type="interactions" value="2"/>
</dbReference>
<dbReference type="STRING" id="10116.ENSRNOP00000016953"/>
<dbReference type="BindingDB" id="P01143"/>
<dbReference type="ChEMBL" id="CHEMBL5291540"/>
<dbReference type="PhosphoSitePlus" id="P01143"/>
<dbReference type="PaxDb" id="10116-ENSRNOP00000016953"/>
<dbReference type="Ensembl" id="ENSRNOT00000016953.3">
    <property type="protein sequence ID" value="ENSRNOP00000016953.1"/>
    <property type="gene ID" value="ENSRNOG00000012703.3"/>
</dbReference>
<dbReference type="GeneID" id="81648"/>
<dbReference type="KEGG" id="rno:81648"/>
<dbReference type="UCSC" id="RGD:620505">
    <property type="organism name" value="rat"/>
</dbReference>
<dbReference type="AGR" id="RGD:620505"/>
<dbReference type="CTD" id="1392"/>
<dbReference type="RGD" id="620505">
    <property type="gene designation" value="Crh"/>
</dbReference>
<dbReference type="eggNOG" id="ENOG502S25G">
    <property type="taxonomic scope" value="Eukaryota"/>
</dbReference>
<dbReference type="GeneTree" id="ENSGT00940000154473"/>
<dbReference type="HOGENOM" id="CLU_136288_0_0_1"/>
<dbReference type="InParanoid" id="P01143"/>
<dbReference type="OMA" id="QHFQERS"/>
<dbReference type="OrthoDB" id="9837731at2759"/>
<dbReference type="PhylomeDB" id="P01143"/>
<dbReference type="TreeFam" id="TF332956"/>
<dbReference type="Reactome" id="R-RNO-373080">
    <property type="pathway name" value="Class B/2 (Secretin family receptors)"/>
</dbReference>
<dbReference type="PRO" id="PR:P01143"/>
<dbReference type="Proteomes" id="UP000002494">
    <property type="component" value="Chromosome 2"/>
</dbReference>
<dbReference type="Bgee" id="ENSRNOG00000012703">
    <property type="expression patterns" value="Expressed in cerebral cortex and 2 other cell types or tissues"/>
</dbReference>
<dbReference type="GO" id="GO:0005615">
    <property type="term" value="C:extracellular space"/>
    <property type="evidence" value="ECO:0000314"/>
    <property type="project" value="RGD"/>
</dbReference>
<dbReference type="GO" id="GO:0043025">
    <property type="term" value="C:neuronal cell body"/>
    <property type="evidence" value="ECO:0000314"/>
    <property type="project" value="RGD"/>
</dbReference>
<dbReference type="GO" id="GO:0099013">
    <property type="term" value="C:neuronal dense core vesicle lumen"/>
    <property type="evidence" value="ECO:0000314"/>
    <property type="project" value="SynGO"/>
</dbReference>
<dbReference type="GO" id="GO:0043204">
    <property type="term" value="C:perikaryon"/>
    <property type="evidence" value="ECO:0000314"/>
    <property type="project" value="RGD"/>
</dbReference>
<dbReference type="GO" id="GO:0045202">
    <property type="term" value="C:synapse"/>
    <property type="evidence" value="ECO:0007669"/>
    <property type="project" value="GOC"/>
</dbReference>
<dbReference type="GO" id="GO:0043196">
    <property type="term" value="C:varicosity"/>
    <property type="evidence" value="ECO:0000314"/>
    <property type="project" value="RGD"/>
</dbReference>
<dbReference type="GO" id="GO:0017045">
    <property type="term" value="F:corticotropin-releasing hormone activity"/>
    <property type="evidence" value="ECO:0000318"/>
    <property type="project" value="GO_Central"/>
</dbReference>
<dbReference type="GO" id="GO:0051430">
    <property type="term" value="F:corticotropin-releasing hormone receptor 1 binding"/>
    <property type="evidence" value="ECO:0000314"/>
    <property type="project" value="RGD"/>
</dbReference>
<dbReference type="GO" id="GO:0051431">
    <property type="term" value="F:corticotropin-releasing hormone receptor 2 binding"/>
    <property type="evidence" value="ECO:0000314"/>
    <property type="project" value="RGD"/>
</dbReference>
<dbReference type="GO" id="GO:0030325">
    <property type="term" value="P:adrenal gland development"/>
    <property type="evidence" value="ECO:0000266"/>
    <property type="project" value="RGD"/>
</dbReference>
<dbReference type="GO" id="GO:0008306">
    <property type="term" value="P:associative learning"/>
    <property type="evidence" value="ECO:0000314"/>
    <property type="project" value="RGD"/>
</dbReference>
<dbReference type="GO" id="GO:0071314">
    <property type="term" value="P:cellular response to cocaine"/>
    <property type="evidence" value="ECO:0000314"/>
    <property type="project" value="UniProtKB"/>
</dbReference>
<dbReference type="GO" id="GO:0071549">
    <property type="term" value="P:cellular response to dexamethasone stimulus"/>
    <property type="evidence" value="ECO:0000270"/>
    <property type="project" value="RGD"/>
</dbReference>
<dbReference type="GO" id="GO:0016101">
    <property type="term" value="P:diterpenoid metabolic process"/>
    <property type="evidence" value="ECO:0000270"/>
    <property type="project" value="RGD"/>
</dbReference>
<dbReference type="GO" id="GO:0007565">
    <property type="term" value="P:female pregnancy"/>
    <property type="evidence" value="ECO:0000266"/>
    <property type="project" value="RGD"/>
</dbReference>
<dbReference type="GO" id="GO:0006704">
    <property type="term" value="P:glucocorticoid biosynthetic process"/>
    <property type="evidence" value="ECO:0000266"/>
    <property type="project" value="RGD"/>
</dbReference>
<dbReference type="GO" id="GO:0008628">
    <property type="term" value="P:hormone-mediated apoptotic signaling pathway"/>
    <property type="evidence" value="ECO:0000314"/>
    <property type="project" value="RGD"/>
</dbReference>
<dbReference type="GO" id="GO:0021854">
    <property type="term" value="P:hypothalamus development"/>
    <property type="evidence" value="ECO:0000270"/>
    <property type="project" value="RGD"/>
</dbReference>
<dbReference type="GO" id="GO:0006954">
    <property type="term" value="P:inflammatory response"/>
    <property type="evidence" value="ECO:0000266"/>
    <property type="project" value="RGD"/>
</dbReference>
<dbReference type="GO" id="GO:0007611">
    <property type="term" value="P:learning or memory"/>
    <property type="evidence" value="ECO:0000315"/>
    <property type="project" value="RGD"/>
</dbReference>
<dbReference type="GO" id="GO:0035641">
    <property type="term" value="P:locomotory exploration behavior"/>
    <property type="evidence" value="ECO:0000266"/>
    <property type="project" value="RGD"/>
</dbReference>
<dbReference type="GO" id="GO:0060291">
    <property type="term" value="P:long-term synaptic potentiation"/>
    <property type="evidence" value="ECO:0000314"/>
    <property type="project" value="RGD"/>
</dbReference>
<dbReference type="GO" id="GO:0030324">
    <property type="term" value="P:lung development"/>
    <property type="evidence" value="ECO:0000266"/>
    <property type="project" value="RGD"/>
</dbReference>
<dbReference type="GO" id="GO:0050801">
    <property type="term" value="P:monoatomic ion homeostasis"/>
    <property type="evidence" value="ECO:0000270"/>
    <property type="project" value="RGD"/>
</dbReference>
<dbReference type="GO" id="GO:0032811">
    <property type="term" value="P:negative regulation of epinephrine secretion"/>
    <property type="evidence" value="ECO:0000314"/>
    <property type="project" value="RGD"/>
</dbReference>
<dbReference type="GO" id="GO:0010629">
    <property type="term" value="P:negative regulation of gene expression"/>
    <property type="evidence" value="ECO:0000315"/>
    <property type="project" value="RGD"/>
</dbReference>
<dbReference type="GO" id="GO:0070093">
    <property type="term" value="P:negative regulation of glucagon secretion"/>
    <property type="evidence" value="ECO:0000314"/>
    <property type="project" value="RGD"/>
</dbReference>
<dbReference type="GO" id="GO:0033685">
    <property type="term" value="P:negative regulation of luteinizing hormone secretion"/>
    <property type="evidence" value="ECO:0000315"/>
    <property type="project" value="RGD"/>
</dbReference>
<dbReference type="GO" id="GO:0010700">
    <property type="term" value="P:negative regulation of norepinephrine secretion"/>
    <property type="evidence" value="ECO:0000314"/>
    <property type="project" value="RGD"/>
</dbReference>
<dbReference type="GO" id="GO:0003085">
    <property type="term" value="P:negative regulation of systemic arterial blood pressure"/>
    <property type="evidence" value="ECO:0000314"/>
    <property type="project" value="RGD"/>
</dbReference>
<dbReference type="GO" id="GO:0051402">
    <property type="term" value="P:neuron apoptotic process"/>
    <property type="evidence" value="ECO:0000314"/>
    <property type="project" value="RGD"/>
</dbReference>
<dbReference type="GO" id="GO:2000987">
    <property type="term" value="P:positive regulation of behavioral fear response"/>
    <property type="evidence" value="ECO:0000314"/>
    <property type="project" value="RGD"/>
</dbReference>
<dbReference type="GO" id="GO:0090280">
    <property type="term" value="P:positive regulation of calcium ion import"/>
    <property type="evidence" value="ECO:0000314"/>
    <property type="project" value="RGD"/>
</dbReference>
<dbReference type="GO" id="GO:0141163">
    <property type="term" value="P:positive regulation of cAMP/PKA signal transduction"/>
    <property type="evidence" value="ECO:0000314"/>
    <property type="project" value="RGD"/>
</dbReference>
<dbReference type="GO" id="GO:0008284">
    <property type="term" value="P:positive regulation of cell population proliferation"/>
    <property type="evidence" value="ECO:0000314"/>
    <property type="project" value="RGD"/>
</dbReference>
<dbReference type="GO" id="GO:2000854">
    <property type="term" value="P:positive regulation of corticosterone secretion"/>
    <property type="evidence" value="ECO:0000314"/>
    <property type="project" value="RGD"/>
</dbReference>
<dbReference type="GO" id="GO:0051461">
    <property type="term" value="P:positive regulation of corticotropin secretion"/>
    <property type="evidence" value="ECO:0000314"/>
    <property type="project" value="RGD"/>
</dbReference>
<dbReference type="GO" id="GO:0051464">
    <property type="term" value="P:positive regulation of cortisol secretion"/>
    <property type="evidence" value="ECO:0000266"/>
    <property type="project" value="RGD"/>
</dbReference>
<dbReference type="GO" id="GO:0060456">
    <property type="term" value="P:positive regulation of digestive system process"/>
    <property type="evidence" value="ECO:0000314"/>
    <property type="project" value="RGD"/>
</dbReference>
<dbReference type="GO" id="GO:0010628">
    <property type="term" value="P:positive regulation of gene expression"/>
    <property type="evidence" value="ECO:0000315"/>
    <property type="project" value="RGD"/>
</dbReference>
<dbReference type="GO" id="GO:0035774">
    <property type="term" value="P:positive regulation of insulin secretion involved in cellular response to glucose stimulus"/>
    <property type="evidence" value="ECO:0000314"/>
    <property type="project" value="RGD"/>
</dbReference>
<dbReference type="GO" id="GO:2000310">
    <property type="term" value="P:regulation of NMDA receptor activity"/>
    <property type="evidence" value="ECO:0000314"/>
    <property type="project" value="UniProtKB"/>
</dbReference>
<dbReference type="GO" id="GO:0014062">
    <property type="term" value="P:regulation of serotonin secretion"/>
    <property type="evidence" value="ECO:0000314"/>
    <property type="project" value="RGD"/>
</dbReference>
<dbReference type="GO" id="GO:0097305">
    <property type="term" value="P:response to alcohol"/>
    <property type="evidence" value="ECO:0000270"/>
    <property type="project" value="RGD"/>
</dbReference>
<dbReference type="GO" id="GO:1904044">
    <property type="term" value="P:response to aldosterone"/>
    <property type="evidence" value="ECO:0000270"/>
    <property type="project" value="RGD"/>
</dbReference>
<dbReference type="GO" id="GO:0042220">
    <property type="term" value="P:response to cocaine"/>
    <property type="evidence" value="ECO:0000270"/>
    <property type="project" value="RGD"/>
</dbReference>
<dbReference type="GO" id="GO:0051412">
    <property type="term" value="P:response to corticosterone"/>
    <property type="evidence" value="ECO:0000270"/>
    <property type="project" value="RGD"/>
</dbReference>
<dbReference type="GO" id="GO:0043627">
    <property type="term" value="P:response to estrogen"/>
    <property type="evidence" value="ECO:0000270"/>
    <property type="project" value="RGD"/>
</dbReference>
<dbReference type="GO" id="GO:0045471">
    <property type="term" value="P:response to ethanol"/>
    <property type="evidence" value="ECO:0000270"/>
    <property type="project" value="RGD"/>
</dbReference>
<dbReference type="GO" id="GO:0045472">
    <property type="term" value="P:response to ether"/>
    <property type="evidence" value="ECO:0000270"/>
    <property type="project" value="RGD"/>
</dbReference>
<dbReference type="GO" id="GO:0035902">
    <property type="term" value="P:response to immobilization stress"/>
    <property type="evidence" value="ECO:0000270"/>
    <property type="project" value="RGD"/>
</dbReference>
<dbReference type="GO" id="GO:0048265">
    <property type="term" value="P:response to pain"/>
    <property type="evidence" value="ECO:0000270"/>
    <property type="project" value="RGD"/>
</dbReference>
<dbReference type="GO" id="GO:0009410">
    <property type="term" value="P:response to xenobiotic stimulus"/>
    <property type="evidence" value="ECO:0000270"/>
    <property type="project" value="RGD"/>
</dbReference>
<dbReference type="GO" id="GO:0008202">
    <property type="term" value="P:steroid metabolic process"/>
    <property type="evidence" value="ECO:0000270"/>
    <property type="project" value="RGD"/>
</dbReference>
<dbReference type="GO" id="GO:0001963">
    <property type="term" value="P:synaptic transmission, dopaminergic"/>
    <property type="evidence" value="ECO:0000314"/>
    <property type="project" value="UniProtKB"/>
</dbReference>
<dbReference type="Gene3D" id="6.10.250.1920">
    <property type="match status" value="1"/>
</dbReference>
<dbReference type="InterPro" id="IPR018446">
    <property type="entry name" value="Corticotropin-releasing_fac_CS"/>
</dbReference>
<dbReference type="InterPro" id="IPR000187">
    <property type="entry name" value="CRF"/>
</dbReference>
<dbReference type="InterPro" id="IPR003620">
    <property type="entry name" value="Urocortin_CRF"/>
</dbReference>
<dbReference type="PANTHER" id="PTHR15035:SF9">
    <property type="entry name" value="CORTICOLIBERIN"/>
    <property type="match status" value="1"/>
</dbReference>
<dbReference type="PANTHER" id="PTHR15035">
    <property type="entry name" value="CORTICOLIBERIN/UROCORTIN"/>
    <property type="match status" value="1"/>
</dbReference>
<dbReference type="Pfam" id="PF00473">
    <property type="entry name" value="CRF"/>
    <property type="match status" value="1"/>
</dbReference>
<dbReference type="PRINTS" id="PR01612">
    <property type="entry name" value="CRFFAMILY"/>
</dbReference>
<dbReference type="SMART" id="SM00039">
    <property type="entry name" value="CRF"/>
    <property type="match status" value="1"/>
</dbReference>
<dbReference type="PROSITE" id="PS00511">
    <property type="entry name" value="CRF"/>
    <property type="match status" value="1"/>
</dbReference>
<feature type="signal peptide" evidence="3">
    <location>
        <begin position="1"/>
        <end position="24"/>
    </location>
</feature>
<feature type="propeptide" id="PRO_0000006218" evidence="6">
    <location>
        <begin position="25"/>
        <end position="144"/>
    </location>
</feature>
<feature type="peptide" id="PRO_0000006219" description="Corticoliberin" evidence="6">
    <location>
        <begin position="145"/>
        <end position="185"/>
    </location>
</feature>
<feature type="region of interest" description="Disordered" evidence="4">
    <location>
        <begin position="75"/>
        <end position="95"/>
    </location>
</feature>
<feature type="modified residue" description="Isoleucine amide" evidence="6">
    <location>
        <position position="185"/>
    </location>
</feature>
<sequence>MRLRLLVSAGMLLVALSPCLPCRALLSRGSVSGAPRAPQPLNFLQPEQPQQPQPILIRMGEEYFLRLGNLNRSPAARLSPNSTPLTAGRGSRPSHDQAAANFFRVLLQQLQMPQRPLDSSTELAERGAEDALGGHQGALERERRSEEPPISLDLTFHLLREVLEMARAEQLAQQAHSNRKLMEIIGK</sequence>
<keyword id="KW-0027">Amidation</keyword>
<keyword id="KW-0165">Cleavage on pair of basic residues</keyword>
<keyword id="KW-0903">Direct protein sequencing</keyword>
<keyword id="KW-0372">Hormone</keyword>
<keyword id="KW-1185">Reference proteome</keyword>
<keyword id="KW-0964">Secreted</keyword>
<keyword id="KW-0732">Signal</keyword>
<gene>
    <name type="primary">Crh</name>
</gene>
<accession>P01143</accession>